<feature type="chain" id="PRO_1000146433" description="Small ribosomal subunit protein uS9">
    <location>
        <begin position="1"/>
        <end position="130"/>
    </location>
</feature>
<protein>
    <recommendedName>
        <fullName evidence="1">Small ribosomal subunit protein uS9</fullName>
    </recommendedName>
    <alternativeName>
        <fullName evidence="2">30S ribosomal protein S9</fullName>
    </alternativeName>
</protein>
<accession>B9IZM8</accession>
<keyword id="KW-0687">Ribonucleoprotein</keyword>
<keyword id="KW-0689">Ribosomal protein</keyword>
<proteinExistence type="inferred from homology"/>
<evidence type="ECO:0000255" key="1">
    <source>
        <dbReference type="HAMAP-Rule" id="MF_00532"/>
    </source>
</evidence>
<evidence type="ECO:0000305" key="2"/>
<sequence length="130" mass="14491">MAQVQYYGTGRRKSSVARVRLVPGEGRVIINGRDFENYIPFAALREVVKQPLVATETLGNYDVLVNVNGGGYTGQAGAIRHGISRALLKADPEYRLTLKRAGLLTRDARMKERKKYGLKGARRAPQFSKR</sequence>
<reference key="1">
    <citation type="journal article" date="2009" name="J. Bacteriol.">
        <title>Complete genome sequence of the extremophilic Bacillus cereus strain Q1 with industrial applications.</title>
        <authorList>
            <person name="Xiong Z."/>
            <person name="Jiang Y."/>
            <person name="Qi D."/>
            <person name="Lu H."/>
            <person name="Yang F."/>
            <person name="Yang J."/>
            <person name="Chen L."/>
            <person name="Sun L."/>
            <person name="Xu X."/>
            <person name="Xue Y."/>
            <person name="Zhu Y."/>
            <person name="Jin Q."/>
        </authorList>
    </citation>
    <scope>NUCLEOTIDE SEQUENCE [LARGE SCALE GENOMIC DNA]</scope>
    <source>
        <strain>Q1</strain>
    </source>
</reference>
<name>RS9_BACCQ</name>
<comment type="similarity">
    <text evidence="1">Belongs to the universal ribosomal protein uS9 family.</text>
</comment>
<gene>
    <name evidence="1" type="primary">rpsI</name>
    <name type="ordered locus">BCQ_0157</name>
</gene>
<organism>
    <name type="scientific">Bacillus cereus (strain Q1)</name>
    <dbReference type="NCBI Taxonomy" id="361100"/>
    <lineage>
        <taxon>Bacteria</taxon>
        <taxon>Bacillati</taxon>
        <taxon>Bacillota</taxon>
        <taxon>Bacilli</taxon>
        <taxon>Bacillales</taxon>
        <taxon>Bacillaceae</taxon>
        <taxon>Bacillus</taxon>
        <taxon>Bacillus cereus group</taxon>
    </lineage>
</organism>
<dbReference type="EMBL" id="CP000227">
    <property type="protein sequence ID" value="ACM10672.1"/>
    <property type="molecule type" value="Genomic_DNA"/>
</dbReference>
<dbReference type="SMR" id="B9IZM8"/>
<dbReference type="KEGG" id="bcq:BCQ_0157"/>
<dbReference type="HOGENOM" id="CLU_046483_2_1_9"/>
<dbReference type="Proteomes" id="UP000000441">
    <property type="component" value="Chromosome"/>
</dbReference>
<dbReference type="GO" id="GO:0022627">
    <property type="term" value="C:cytosolic small ribosomal subunit"/>
    <property type="evidence" value="ECO:0007669"/>
    <property type="project" value="TreeGrafter"/>
</dbReference>
<dbReference type="GO" id="GO:0003723">
    <property type="term" value="F:RNA binding"/>
    <property type="evidence" value="ECO:0007669"/>
    <property type="project" value="TreeGrafter"/>
</dbReference>
<dbReference type="GO" id="GO:0003735">
    <property type="term" value="F:structural constituent of ribosome"/>
    <property type="evidence" value="ECO:0007669"/>
    <property type="project" value="InterPro"/>
</dbReference>
<dbReference type="GO" id="GO:0006412">
    <property type="term" value="P:translation"/>
    <property type="evidence" value="ECO:0007669"/>
    <property type="project" value="UniProtKB-UniRule"/>
</dbReference>
<dbReference type="FunFam" id="3.30.230.10:FF:000001">
    <property type="entry name" value="30S ribosomal protein S9"/>
    <property type="match status" value="1"/>
</dbReference>
<dbReference type="Gene3D" id="3.30.230.10">
    <property type="match status" value="1"/>
</dbReference>
<dbReference type="HAMAP" id="MF_00532_B">
    <property type="entry name" value="Ribosomal_uS9_B"/>
    <property type="match status" value="1"/>
</dbReference>
<dbReference type="InterPro" id="IPR020568">
    <property type="entry name" value="Ribosomal_Su5_D2-typ_SF"/>
</dbReference>
<dbReference type="InterPro" id="IPR000754">
    <property type="entry name" value="Ribosomal_uS9"/>
</dbReference>
<dbReference type="InterPro" id="IPR023035">
    <property type="entry name" value="Ribosomal_uS9_bac/plastid"/>
</dbReference>
<dbReference type="InterPro" id="IPR020574">
    <property type="entry name" value="Ribosomal_uS9_CS"/>
</dbReference>
<dbReference type="InterPro" id="IPR014721">
    <property type="entry name" value="Ribsml_uS5_D2-typ_fold_subgr"/>
</dbReference>
<dbReference type="NCBIfam" id="NF001099">
    <property type="entry name" value="PRK00132.1"/>
    <property type="match status" value="1"/>
</dbReference>
<dbReference type="PANTHER" id="PTHR21569">
    <property type="entry name" value="RIBOSOMAL PROTEIN S9"/>
    <property type="match status" value="1"/>
</dbReference>
<dbReference type="PANTHER" id="PTHR21569:SF1">
    <property type="entry name" value="SMALL RIBOSOMAL SUBUNIT PROTEIN US9M"/>
    <property type="match status" value="1"/>
</dbReference>
<dbReference type="Pfam" id="PF00380">
    <property type="entry name" value="Ribosomal_S9"/>
    <property type="match status" value="1"/>
</dbReference>
<dbReference type="SUPFAM" id="SSF54211">
    <property type="entry name" value="Ribosomal protein S5 domain 2-like"/>
    <property type="match status" value="1"/>
</dbReference>
<dbReference type="PROSITE" id="PS00360">
    <property type="entry name" value="RIBOSOMAL_S9"/>
    <property type="match status" value="1"/>
</dbReference>